<protein>
    <recommendedName>
        <fullName>Metallothionein-1</fullName>
        <shortName>MT-1</shortName>
    </recommendedName>
    <alternativeName>
        <fullName>Metallothionein-I</fullName>
        <shortName>MT-I</shortName>
    </alternativeName>
</protein>
<keyword id="KW-0186">Copper</keyword>
<keyword id="KW-0479">Metal-binding</keyword>
<keyword id="KW-0480">Metal-thiolate cluster</keyword>
<keyword id="KW-1185">Reference proteome</keyword>
<sequence>MEFTTAMFGTSLIFTTSTQSKHNLVNNCCCSSSTSESSMPASCACTKCGCKTCKC</sequence>
<proteinExistence type="inferred from homology"/>
<comment type="similarity">
    <text evidence="1">Belongs to the metallothionein superfamily. Type 11 family.</text>
</comment>
<evidence type="ECO:0000305" key="1"/>
<accession>P41927</accession>
<accession>B5RSJ6</accession>
<name>MT1_YARLI</name>
<gene>
    <name type="primary">MTP1</name>
    <name type="ordered locus">YALI0A02416g</name>
</gene>
<dbReference type="EMBL" id="Z23264">
    <property type="protein sequence ID" value="CAA80801.1"/>
    <property type="molecule type" value="Genomic_DNA"/>
</dbReference>
<dbReference type="EMBL" id="CR382127">
    <property type="protein sequence ID" value="CAR65181.1"/>
    <property type="molecule type" value="Genomic_DNA"/>
</dbReference>
<dbReference type="RefSeq" id="XP_002142982.1">
    <property type="nucleotide sequence ID" value="XM_002142946.1"/>
</dbReference>
<dbReference type="EnsemblFungi" id="CAR65181">
    <property type="protein sequence ID" value="CAR65181"/>
    <property type="gene ID" value="YALI0_A02416g"/>
</dbReference>
<dbReference type="VEuPathDB" id="FungiDB:YALI0_A02416g"/>
<dbReference type="HOGENOM" id="CLU_3034143_0_0_1"/>
<dbReference type="InParanoid" id="P41927"/>
<dbReference type="Proteomes" id="UP000001300">
    <property type="component" value="Chromosome A"/>
</dbReference>
<dbReference type="GO" id="GO:0005507">
    <property type="term" value="F:copper ion binding"/>
    <property type="evidence" value="ECO:0007669"/>
    <property type="project" value="InterPro"/>
</dbReference>
<dbReference type="InterPro" id="IPR000869">
    <property type="entry name" value="Metalthion_11"/>
</dbReference>
<dbReference type="Pfam" id="PF02066">
    <property type="entry name" value="Metallothio_11"/>
    <property type="match status" value="1"/>
</dbReference>
<dbReference type="PRINTS" id="PR00874">
    <property type="entry name" value="MTFUNGIIV"/>
</dbReference>
<feature type="chain" id="PRO_0000197366" description="Metallothionein-1">
    <location>
        <begin position="1"/>
        <end position="55"/>
    </location>
</feature>
<organism>
    <name type="scientific">Yarrowia lipolytica (strain CLIB 122 / E 150)</name>
    <name type="common">Yeast</name>
    <name type="synonym">Candida lipolytica</name>
    <dbReference type="NCBI Taxonomy" id="284591"/>
    <lineage>
        <taxon>Eukaryota</taxon>
        <taxon>Fungi</taxon>
        <taxon>Dikarya</taxon>
        <taxon>Ascomycota</taxon>
        <taxon>Saccharomycotina</taxon>
        <taxon>Dipodascomycetes</taxon>
        <taxon>Dipodascales</taxon>
        <taxon>Dipodascales incertae sedis</taxon>
        <taxon>Yarrowia</taxon>
    </lineage>
</organism>
<reference key="1">
    <citation type="thesis" date="1994" institute="University of Salamanca" country="Spain">
        <authorList>
            <person name="Prado M."/>
        </authorList>
    </citation>
    <scope>NUCLEOTIDE SEQUENCE [GENOMIC DNA]</scope>
    <source>
        <strain>ATCC 20460 / W29 / CBS 7504 / IFP29</strain>
    </source>
</reference>
<reference key="2">
    <citation type="journal article" date="2004" name="Nature">
        <title>Genome evolution in yeasts.</title>
        <authorList>
            <person name="Dujon B."/>
            <person name="Sherman D."/>
            <person name="Fischer G."/>
            <person name="Durrens P."/>
            <person name="Casaregola S."/>
            <person name="Lafontaine I."/>
            <person name="de Montigny J."/>
            <person name="Marck C."/>
            <person name="Neuveglise C."/>
            <person name="Talla E."/>
            <person name="Goffard N."/>
            <person name="Frangeul L."/>
            <person name="Aigle M."/>
            <person name="Anthouard V."/>
            <person name="Babour A."/>
            <person name="Barbe V."/>
            <person name="Barnay S."/>
            <person name="Blanchin S."/>
            <person name="Beckerich J.-M."/>
            <person name="Beyne E."/>
            <person name="Bleykasten C."/>
            <person name="Boisrame A."/>
            <person name="Boyer J."/>
            <person name="Cattolico L."/>
            <person name="Confanioleri F."/>
            <person name="de Daruvar A."/>
            <person name="Despons L."/>
            <person name="Fabre E."/>
            <person name="Fairhead C."/>
            <person name="Ferry-Dumazet H."/>
            <person name="Groppi A."/>
            <person name="Hantraye F."/>
            <person name="Hennequin C."/>
            <person name="Jauniaux N."/>
            <person name="Joyet P."/>
            <person name="Kachouri R."/>
            <person name="Kerrest A."/>
            <person name="Koszul R."/>
            <person name="Lemaire M."/>
            <person name="Lesur I."/>
            <person name="Ma L."/>
            <person name="Muller H."/>
            <person name="Nicaud J.-M."/>
            <person name="Nikolski M."/>
            <person name="Oztas S."/>
            <person name="Ozier-Kalogeropoulos O."/>
            <person name="Pellenz S."/>
            <person name="Potier S."/>
            <person name="Richard G.-F."/>
            <person name="Straub M.-L."/>
            <person name="Suleau A."/>
            <person name="Swennen D."/>
            <person name="Tekaia F."/>
            <person name="Wesolowski-Louvel M."/>
            <person name="Westhof E."/>
            <person name="Wirth B."/>
            <person name="Zeniou-Meyer M."/>
            <person name="Zivanovic Y."/>
            <person name="Bolotin-Fukuhara M."/>
            <person name="Thierry A."/>
            <person name="Bouchier C."/>
            <person name="Caudron B."/>
            <person name="Scarpelli C."/>
            <person name="Gaillardin C."/>
            <person name="Weissenbach J."/>
            <person name="Wincker P."/>
            <person name="Souciet J.-L."/>
        </authorList>
    </citation>
    <scope>NUCLEOTIDE SEQUENCE [LARGE SCALE GENOMIC DNA]</scope>
    <source>
        <strain>CLIB 122 / E 150</strain>
    </source>
</reference>